<sequence>MDNFLALTLTGKKPVITEREINGVRWRWLGDGVLELTPLTPPQGALVISAGIHGNETAPVEMLDALLGAISHGEIPLRWRLLVILGNPPALKQGKRYCHSDMNRMFGGRWQLFAESGETCRARELEQCLEDFYDQGKESVRWHLDLHTAIRGSLHPQFGVLPQRDIPWDEKFLTWLGAAGLEALVFHQEPGGTFTHFSARHFGALACTLELGKALPFGQNDLRQFAVTASAIAALLSGESVGIVRTPPLRYRVVSQITRHSPSFEMHMASDTLNFMPFEKGTLLAQDGEERFTVTHDVEYVLFPNPLVALGLRAGLMLEKIS</sequence>
<protein>
    <recommendedName>
        <fullName>Succinylglutamate desuccinylase</fullName>
        <ecNumber evidence="4">3.5.1.96</ecNumber>
    </recommendedName>
</protein>
<feature type="chain" id="PRO_0000174639" description="Succinylglutamate desuccinylase">
    <location>
        <begin position="1"/>
        <end position="322"/>
    </location>
</feature>
<feature type="active site" evidence="2">
    <location>
        <position position="210"/>
    </location>
</feature>
<feature type="binding site" evidence="1">
    <location>
        <position position="53"/>
    </location>
    <ligand>
        <name>Zn(2+)</name>
        <dbReference type="ChEBI" id="CHEBI:29105"/>
    </ligand>
</feature>
<feature type="binding site" evidence="1">
    <location>
        <position position="56"/>
    </location>
    <ligand>
        <name>Zn(2+)</name>
        <dbReference type="ChEBI" id="CHEBI:29105"/>
    </ligand>
</feature>
<feature type="binding site" evidence="1">
    <location>
        <position position="147"/>
    </location>
    <ligand>
        <name>Zn(2+)</name>
        <dbReference type="ChEBI" id="CHEBI:29105"/>
    </ligand>
</feature>
<feature type="helix" evidence="7">
    <location>
        <begin position="1"/>
        <end position="10"/>
    </location>
</feature>
<feature type="strand" evidence="7">
    <location>
        <begin position="18"/>
        <end position="30"/>
    </location>
</feature>
<feature type="strand" evidence="7">
    <location>
        <begin position="33"/>
        <end position="40"/>
    </location>
</feature>
<feature type="strand" evidence="7">
    <location>
        <begin position="45"/>
        <end position="50"/>
    </location>
</feature>
<feature type="strand" evidence="7">
    <location>
        <begin position="52"/>
        <end position="55"/>
    </location>
</feature>
<feature type="helix" evidence="7">
    <location>
        <begin position="58"/>
        <end position="71"/>
    </location>
</feature>
<feature type="strand" evidence="7">
    <location>
        <begin position="79"/>
        <end position="84"/>
    </location>
</feature>
<feature type="helix" evidence="7">
    <location>
        <begin position="88"/>
        <end position="91"/>
    </location>
</feature>
<feature type="strand" evidence="7">
    <location>
        <begin position="105"/>
        <end position="110"/>
    </location>
</feature>
<feature type="helix" evidence="7">
    <location>
        <begin position="117"/>
        <end position="134"/>
    </location>
</feature>
<feature type="strand" evidence="7">
    <location>
        <begin position="141"/>
        <end position="147"/>
    </location>
</feature>
<feature type="strand" evidence="7">
    <location>
        <begin position="153"/>
        <end position="161"/>
    </location>
</feature>
<feature type="helix" evidence="7">
    <location>
        <begin position="170"/>
        <end position="178"/>
    </location>
</feature>
<feature type="strand" evidence="7">
    <location>
        <begin position="182"/>
        <end position="186"/>
    </location>
</feature>
<feature type="helix" evidence="7">
    <location>
        <begin position="194"/>
        <end position="201"/>
    </location>
</feature>
<feature type="strand" evidence="7">
    <location>
        <begin position="205"/>
        <end position="210"/>
    </location>
</feature>
<feature type="helix" evidence="7">
    <location>
        <begin position="225"/>
        <end position="236"/>
    </location>
</feature>
<feature type="strand" evidence="7">
    <location>
        <begin position="244"/>
        <end position="246"/>
    </location>
</feature>
<feature type="strand" evidence="7">
    <location>
        <begin position="249"/>
        <end position="255"/>
    </location>
</feature>
<feature type="strand" evidence="7">
    <location>
        <begin position="277"/>
        <end position="279"/>
    </location>
</feature>
<feature type="strand" evidence="7">
    <location>
        <begin position="296"/>
        <end position="302"/>
    </location>
</feature>
<feature type="strand" evidence="7">
    <location>
        <begin position="316"/>
        <end position="321"/>
    </location>
</feature>
<organism>
    <name type="scientific">Escherichia coli (strain K12)</name>
    <dbReference type="NCBI Taxonomy" id="83333"/>
    <lineage>
        <taxon>Bacteria</taxon>
        <taxon>Pseudomonadati</taxon>
        <taxon>Pseudomonadota</taxon>
        <taxon>Gammaproteobacteria</taxon>
        <taxon>Enterobacterales</taxon>
        <taxon>Enterobacteriaceae</taxon>
        <taxon>Escherichia</taxon>
    </lineage>
</organism>
<accession>P76215</accession>
<accession>Q2MB41</accession>
<proteinExistence type="evidence at protein level"/>
<reference key="1">
    <citation type="journal article" date="1997" name="Science">
        <title>The complete genome sequence of Escherichia coli K-12.</title>
        <authorList>
            <person name="Blattner F.R."/>
            <person name="Plunkett G. III"/>
            <person name="Bloch C.A."/>
            <person name="Perna N.T."/>
            <person name="Burland V."/>
            <person name="Riley M."/>
            <person name="Collado-Vides J."/>
            <person name="Glasner J.D."/>
            <person name="Rode C.K."/>
            <person name="Mayhew G.F."/>
            <person name="Gregor J."/>
            <person name="Davis N.W."/>
            <person name="Kirkpatrick H.A."/>
            <person name="Goeden M.A."/>
            <person name="Rose D.J."/>
            <person name="Mau B."/>
            <person name="Shao Y."/>
        </authorList>
    </citation>
    <scope>NUCLEOTIDE SEQUENCE [LARGE SCALE GENOMIC DNA]</scope>
    <source>
        <strain>K12 / MG1655 / ATCC 47076</strain>
    </source>
</reference>
<reference key="2">
    <citation type="journal article" date="2006" name="Mol. Syst. Biol.">
        <title>Highly accurate genome sequences of Escherichia coli K-12 strains MG1655 and W3110.</title>
        <authorList>
            <person name="Hayashi K."/>
            <person name="Morooka N."/>
            <person name="Yamamoto Y."/>
            <person name="Fujita K."/>
            <person name="Isono K."/>
            <person name="Choi S."/>
            <person name="Ohtsubo E."/>
            <person name="Baba T."/>
            <person name="Wanner B.L."/>
            <person name="Mori H."/>
            <person name="Horiuchi T."/>
        </authorList>
    </citation>
    <scope>NUCLEOTIDE SEQUENCE [LARGE SCALE GENOMIC DNA]</scope>
    <source>
        <strain>K12 / W3110 / ATCC 27325 / DSM 5911</strain>
    </source>
</reference>
<reference key="3">
    <citation type="journal article" date="1997" name="J. Bacteriol.">
        <title>A new periplasmic protein of Escherichia coli which is synthesized in spheroplasts but not in intact cells.</title>
        <authorList>
            <person name="Hagenmaier S."/>
            <person name="Stierhof Y.-D."/>
            <person name="Henning U."/>
        </authorList>
    </citation>
    <scope>NUCLEOTIDE SEQUENCE [GENOMIC DNA] OF 92-322</scope>
    <source>
        <strain>K12</strain>
    </source>
</reference>
<reference key="4">
    <citation type="journal article" date="1998" name="J. Bacteriol.">
        <title>Arginine catabolism and the arginine succinyltransferase pathway in Escherichia coli.</title>
        <authorList>
            <person name="Schneider B.L."/>
            <person name="Kiupakis A.K."/>
            <person name="Reitzer L.J."/>
        </authorList>
    </citation>
    <scope>FUNCTION</scope>
    <scope>CATALYTIC ACTIVITY</scope>
</reference>
<reference key="5">
    <citation type="journal article" date="1999" name="J. Mol. Biol.">
        <title>The Zn-peptidase superfamily: functional convergence after evolutionary divergence.</title>
        <authorList>
            <person name="Makarova K.S."/>
            <person name="Grishin N.V."/>
        </authorList>
    </citation>
    <scope>PREDICTION OF ZINC-BINDING RESIDUES AND ACTIVE SITE</scope>
</reference>
<reference key="6">
    <citation type="journal article" date="2002" name="J. Bacteriol.">
        <title>ArgR-independent induction and ArgR-dependent superinduction of the astCADBE operon in Escherichia coli.</title>
        <authorList>
            <person name="Kiupakis A.K."/>
            <person name="Reitzer L."/>
        </authorList>
    </citation>
    <scope>INDUCTION</scope>
</reference>
<reference key="7">
    <citation type="submission" date="2005-05" db="PDB data bank">
        <title>Crystal structure of succinylglutamate desuccinylase from Escherichia coli, Northeast structural genomics target Et72.</title>
        <authorList>
            <consortium name="Northeast structural genomics consortium (NESG)"/>
        </authorList>
    </citation>
    <scope>X-RAY CRYSTALLOGRAPHY (3.1 ANGSTROMS)</scope>
</reference>
<keyword id="KW-0002">3D-structure</keyword>
<keyword id="KW-0056">Arginine metabolism</keyword>
<keyword id="KW-0378">Hydrolase</keyword>
<keyword id="KW-0479">Metal-binding</keyword>
<keyword id="KW-1185">Reference proteome</keyword>
<keyword id="KW-0346">Stress response</keyword>
<keyword id="KW-0862">Zinc</keyword>
<name>ASTE_ECOLI</name>
<dbReference type="EC" id="3.5.1.96" evidence="4"/>
<dbReference type="EMBL" id="U00096">
    <property type="protein sequence ID" value="AAC74814.1"/>
    <property type="molecule type" value="Genomic_DNA"/>
</dbReference>
<dbReference type="EMBL" id="AP009048">
    <property type="protein sequence ID" value="BAE76515.1"/>
    <property type="molecule type" value="Genomic_DNA"/>
</dbReference>
<dbReference type="PIR" id="H64933">
    <property type="entry name" value="H64933"/>
</dbReference>
<dbReference type="RefSeq" id="NP_416258.1">
    <property type="nucleotide sequence ID" value="NC_000913.3"/>
</dbReference>
<dbReference type="RefSeq" id="WP_000368506.1">
    <property type="nucleotide sequence ID" value="NZ_SSZK01000001.1"/>
</dbReference>
<dbReference type="PDB" id="1YW6">
    <property type="method" value="X-ray"/>
    <property type="resolution" value="3.10 A"/>
    <property type="chains" value="A/B=1-322"/>
</dbReference>
<dbReference type="PDBsum" id="1YW6"/>
<dbReference type="SMR" id="P76215"/>
<dbReference type="BioGRID" id="4262239">
    <property type="interactions" value="25"/>
</dbReference>
<dbReference type="BioGRID" id="850616">
    <property type="interactions" value="4"/>
</dbReference>
<dbReference type="FunCoup" id="P76215">
    <property type="interactions" value="57"/>
</dbReference>
<dbReference type="IntAct" id="P76215">
    <property type="interactions" value="10"/>
</dbReference>
<dbReference type="STRING" id="511145.b1744"/>
<dbReference type="jPOST" id="P76215"/>
<dbReference type="PaxDb" id="511145-b1744"/>
<dbReference type="EnsemblBacteria" id="AAC74814">
    <property type="protein sequence ID" value="AAC74814"/>
    <property type="gene ID" value="b1744"/>
</dbReference>
<dbReference type="GeneID" id="946256"/>
<dbReference type="KEGG" id="ecj:JW1733"/>
<dbReference type="KEGG" id="eco:b1744"/>
<dbReference type="KEGG" id="ecoc:C3026_09965"/>
<dbReference type="PATRIC" id="fig|1411691.4.peg.512"/>
<dbReference type="EchoBASE" id="EB3751"/>
<dbReference type="eggNOG" id="COG2988">
    <property type="taxonomic scope" value="Bacteria"/>
</dbReference>
<dbReference type="HOGENOM" id="CLU_071608_0_0_6"/>
<dbReference type="InParanoid" id="P76215"/>
<dbReference type="OMA" id="CAVHGNE"/>
<dbReference type="OrthoDB" id="5290473at2"/>
<dbReference type="PhylomeDB" id="P76215"/>
<dbReference type="BioCyc" id="EcoCyc:SUCCGLUDESUCC-MONOMER"/>
<dbReference type="BioCyc" id="MetaCyc:SUCCGLUDESUCC-MONOMER"/>
<dbReference type="BRENDA" id="3.5.1.96">
    <property type="organism ID" value="2026"/>
</dbReference>
<dbReference type="UniPathway" id="UPA00185">
    <property type="reaction ID" value="UER00283"/>
</dbReference>
<dbReference type="EvolutionaryTrace" id="P76215"/>
<dbReference type="PRO" id="PR:P76215"/>
<dbReference type="Proteomes" id="UP000000625">
    <property type="component" value="Chromosome"/>
</dbReference>
<dbReference type="GO" id="GO:0016811">
    <property type="term" value="F:hydrolase activity, acting on carbon-nitrogen (but not peptide) bonds, in linear amides"/>
    <property type="evidence" value="ECO:0000318"/>
    <property type="project" value="GO_Central"/>
</dbReference>
<dbReference type="GO" id="GO:0016788">
    <property type="term" value="F:hydrolase activity, acting on ester bonds"/>
    <property type="evidence" value="ECO:0007669"/>
    <property type="project" value="UniProtKB-UniRule"/>
</dbReference>
<dbReference type="GO" id="GO:0009017">
    <property type="term" value="F:succinylglutamate desuccinylase activity"/>
    <property type="evidence" value="ECO:0000314"/>
    <property type="project" value="EcoCyc"/>
</dbReference>
<dbReference type="GO" id="GO:0008270">
    <property type="term" value="F:zinc ion binding"/>
    <property type="evidence" value="ECO:0007669"/>
    <property type="project" value="UniProtKB-UniRule"/>
</dbReference>
<dbReference type="GO" id="GO:0019544">
    <property type="term" value="P:arginine catabolic process to glutamate"/>
    <property type="evidence" value="ECO:0007669"/>
    <property type="project" value="UniProtKB-UniRule"/>
</dbReference>
<dbReference type="GO" id="GO:0019545">
    <property type="term" value="P:arginine catabolic process to succinate"/>
    <property type="evidence" value="ECO:0007669"/>
    <property type="project" value="UniProtKB-UniRule"/>
</dbReference>
<dbReference type="CDD" id="cd03855">
    <property type="entry name" value="M14_ASTE"/>
    <property type="match status" value="1"/>
</dbReference>
<dbReference type="FunFam" id="3.40.630.10:FF:000017">
    <property type="entry name" value="Succinylglutamate desuccinylase"/>
    <property type="match status" value="1"/>
</dbReference>
<dbReference type="Gene3D" id="3.40.630.10">
    <property type="entry name" value="Zn peptidases"/>
    <property type="match status" value="1"/>
</dbReference>
<dbReference type="HAMAP" id="MF_00767">
    <property type="entry name" value="Arg_catab_AstE"/>
    <property type="match status" value="1"/>
</dbReference>
<dbReference type="InterPro" id="IPR050178">
    <property type="entry name" value="AspA/AstE_fam"/>
</dbReference>
<dbReference type="InterPro" id="IPR055438">
    <property type="entry name" value="AstE_AspA_cat"/>
</dbReference>
<dbReference type="InterPro" id="IPR007036">
    <property type="entry name" value="Aste_AspA_hybrid_dom"/>
</dbReference>
<dbReference type="InterPro" id="IPR016681">
    <property type="entry name" value="SuccinylGlu_desuccinylase"/>
</dbReference>
<dbReference type="NCBIfam" id="TIGR03242">
    <property type="entry name" value="arg_catab_astE"/>
    <property type="match status" value="1"/>
</dbReference>
<dbReference type="NCBIfam" id="NF003706">
    <property type="entry name" value="PRK05324.1"/>
    <property type="match status" value="1"/>
</dbReference>
<dbReference type="PANTHER" id="PTHR15162">
    <property type="entry name" value="ASPARTOACYLASE"/>
    <property type="match status" value="1"/>
</dbReference>
<dbReference type="PANTHER" id="PTHR15162:SF7">
    <property type="entry name" value="SUCCINYLGLUTAMATE DESUCCINYLASE"/>
    <property type="match status" value="1"/>
</dbReference>
<dbReference type="Pfam" id="PF24827">
    <property type="entry name" value="AstE_AspA_cat"/>
    <property type="match status" value="1"/>
</dbReference>
<dbReference type="Pfam" id="PF04952">
    <property type="entry name" value="AstE_AspA_hybrid"/>
    <property type="match status" value="1"/>
</dbReference>
<dbReference type="PIRSF" id="PIRSF017020">
    <property type="entry name" value="AstE"/>
    <property type="match status" value="1"/>
</dbReference>
<dbReference type="SUPFAM" id="SSF53187">
    <property type="entry name" value="Zn-dependent exopeptidases"/>
    <property type="match status" value="1"/>
</dbReference>
<gene>
    <name type="primary">astE</name>
    <name type="synonym">ydjS</name>
    <name type="ordered locus">b1744</name>
    <name type="ordered locus">JW1733</name>
</gene>
<evidence type="ECO:0000250" key="1"/>
<evidence type="ECO:0000255" key="2"/>
<evidence type="ECO:0000269" key="3">
    <source>
    </source>
</evidence>
<evidence type="ECO:0000269" key="4">
    <source>
    </source>
</evidence>
<evidence type="ECO:0000305" key="5"/>
<evidence type="ECO:0000305" key="6">
    <source>
    </source>
</evidence>
<evidence type="ECO:0007829" key="7">
    <source>
        <dbReference type="PDB" id="1YW6"/>
    </source>
</evidence>
<comment type="function">
    <text evidence="4">Transforms N(2)-succinylglutamate into succinate and glutamate.</text>
</comment>
<comment type="catalytic activity">
    <reaction evidence="4">
        <text>N-succinyl-L-glutamate + H2O = L-glutamate + succinate</text>
        <dbReference type="Rhea" id="RHEA:15169"/>
        <dbReference type="ChEBI" id="CHEBI:15377"/>
        <dbReference type="ChEBI" id="CHEBI:29985"/>
        <dbReference type="ChEBI" id="CHEBI:30031"/>
        <dbReference type="ChEBI" id="CHEBI:58763"/>
        <dbReference type="EC" id="3.5.1.96"/>
    </reaction>
    <physiologicalReaction direction="left-to-right" evidence="6">
        <dbReference type="Rhea" id="RHEA:15170"/>
    </physiologicalReaction>
</comment>
<comment type="cofactor">
    <cofactor evidence="1">
        <name>Zn(2+)</name>
        <dbReference type="ChEBI" id="CHEBI:29105"/>
    </cofactor>
    <text evidence="1">Binds 1 zinc ion per subunit.</text>
</comment>
<comment type="pathway">
    <text evidence="6">Amino-acid degradation; L-arginine degradation via AST pathway; L-glutamate and succinate from L-arginine: step 5/5.</text>
</comment>
<comment type="interaction">
    <interactant intactId="EBI-1121806">
        <id>P76215</id>
    </interactant>
    <interactant intactId="EBI-1117360">
        <id>P0ACS9</id>
        <label>acrR</label>
    </interactant>
    <organismsDiffer>false</organismsDiffer>
    <experiments>3</experiments>
</comment>
<comment type="induction">
    <text evidence="3">By nitrogen starvation, and arginine. Induced at stationary phase by sigma S.</text>
</comment>
<comment type="similarity">
    <text evidence="5">Belongs to the AspA/AstE family. Succinylglutamate desuccinylase subfamily.</text>
</comment>